<accession>O64636</accession>
<accession>O65783</accession>
<protein>
    <recommendedName>
        <fullName>Cytochrome P450 76C1</fullName>
        <ecNumber>1.14.-.-</ecNumber>
    </recommendedName>
</protein>
<organism>
    <name type="scientific">Arabidopsis thaliana</name>
    <name type="common">Mouse-ear cress</name>
    <dbReference type="NCBI Taxonomy" id="3702"/>
    <lineage>
        <taxon>Eukaryota</taxon>
        <taxon>Viridiplantae</taxon>
        <taxon>Streptophyta</taxon>
        <taxon>Embryophyta</taxon>
        <taxon>Tracheophyta</taxon>
        <taxon>Spermatophyta</taxon>
        <taxon>Magnoliopsida</taxon>
        <taxon>eudicotyledons</taxon>
        <taxon>Gunneridae</taxon>
        <taxon>Pentapetalae</taxon>
        <taxon>rosids</taxon>
        <taxon>malvids</taxon>
        <taxon>Brassicales</taxon>
        <taxon>Brassicaceae</taxon>
        <taxon>Camelineae</taxon>
        <taxon>Arabidopsis</taxon>
    </lineage>
</organism>
<keyword id="KW-0025">Alternative splicing</keyword>
<keyword id="KW-0349">Heme</keyword>
<keyword id="KW-0408">Iron</keyword>
<keyword id="KW-0472">Membrane</keyword>
<keyword id="KW-0479">Metal-binding</keyword>
<keyword id="KW-0503">Monooxygenase</keyword>
<keyword id="KW-0560">Oxidoreductase</keyword>
<keyword id="KW-1185">Reference proteome</keyword>
<keyword id="KW-0812">Transmembrane</keyword>
<keyword id="KW-1133">Transmembrane helix</keyword>
<feature type="chain" id="PRO_0000052141" description="Cytochrome P450 76C1">
    <location>
        <begin position="1"/>
        <end position="512"/>
    </location>
</feature>
<feature type="transmembrane region" description="Helical" evidence="2">
    <location>
        <begin position="3"/>
        <end position="23"/>
    </location>
</feature>
<feature type="binding site" description="axial binding residue" evidence="1">
    <location>
        <position position="450"/>
    </location>
    <ligand>
        <name>heme</name>
        <dbReference type="ChEBI" id="CHEBI:30413"/>
    </ligand>
    <ligandPart>
        <name>Fe</name>
        <dbReference type="ChEBI" id="CHEBI:18248"/>
    </ligandPart>
</feature>
<feature type="splice variant" id="VSP_000619" description="In isoform Short." evidence="3">
    <original>DMFTAGTDTSSSTLEW</original>
    <variation>VSLTLLQIIMIYKIME</variation>
    <location>
        <begin position="307"/>
        <end position="322"/>
    </location>
</feature>
<feature type="splice variant" id="VSP_000620" description="In isoform Short." evidence="3">
    <location>
        <begin position="323"/>
        <end position="512"/>
    </location>
</feature>
<feature type="sequence conflict" description="In Ref. 1; BAA28540." evidence="4" ref="1">
    <original>A</original>
    <variation>P</variation>
    <location>
        <position position="323"/>
    </location>
</feature>
<reference key="1">
    <citation type="journal article" date="1998" name="Plant Mol. Biol.">
        <title>Cytochrome P450 superfamily in Arabidopsis thaliana: isolation of cDNAs, differential expression, and RFLP mapping of multiple cytochromes P450.</title>
        <authorList>
            <person name="Mizutani M."/>
            <person name="Ward E."/>
            <person name="Ohta D."/>
        </authorList>
    </citation>
    <scope>NUCLEOTIDE SEQUENCE [MRNA] (ISOFORM LONG)</scope>
    <source>
        <strain>cv. Columbia</strain>
        <tissue>Seedling</tissue>
    </source>
</reference>
<reference key="2">
    <citation type="journal article" date="1999" name="Nature">
        <title>Sequence and analysis of chromosome 2 of the plant Arabidopsis thaliana.</title>
        <authorList>
            <person name="Lin X."/>
            <person name="Kaul S."/>
            <person name="Rounsley S.D."/>
            <person name="Shea T.P."/>
            <person name="Benito M.-I."/>
            <person name="Town C.D."/>
            <person name="Fujii C.Y."/>
            <person name="Mason T.M."/>
            <person name="Bowman C.L."/>
            <person name="Barnstead M.E."/>
            <person name="Feldblyum T.V."/>
            <person name="Buell C.R."/>
            <person name="Ketchum K.A."/>
            <person name="Lee J.J."/>
            <person name="Ronning C.M."/>
            <person name="Koo H.L."/>
            <person name="Moffat K.S."/>
            <person name="Cronin L.A."/>
            <person name="Shen M."/>
            <person name="Pai G."/>
            <person name="Van Aken S."/>
            <person name="Umayam L."/>
            <person name="Tallon L.J."/>
            <person name="Gill J.E."/>
            <person name="Adams M.D."/>
            <person name="Carrera A.J."/>
            <person name="Creasy T.H."/>
            <person name="Goodman H.M."/>
            <person name="Somerville C.R."/>
            <person name="Copenhaver G.P."/>
            <person name="Preuss D."/>
            <person name="Nierman W.C."/>
            <person name="White O."/>
            <person name="Eisen J.A."/>
            <person name="Salzberg S.L."/>
            <person name="Fraser C.M."/>
            <person name="Venter J.C."/>
        </authorList>
    </citation>
    <scope>NUCLEOTIDE SEQUENCE [LARGE SCALE GENOMIC DNA]</scope>
    <source>
        <strain>cv. Columbia</strain>
    </source>
</reference>
<reference key="3">
    <citation type="journal article" date="2017" name="Plant J.">
        <title>Araport11: a complete reannotation of the Arabidopsis thaliana reference genome.</title>
        <authorList>
            <person name="Cheng C.Y."/>
            <person name="Krishnakumar V."/>
            <person name="Chan A.P."/>
            <person name="Thibaud-Nissen F."/>
            <person name="Schobel S."/>
            <person name="Town C.D."/>
        </authorList>
    </citation>
    <scope>GENOME REANNOTATION</scope>
    <source>
        <strain>cv. Columbia</strain>
    </source>
</reference>
<reference key="4">
    <citation type="journal article" date="2003" name="Science">
        <title>Empirical analysis of transcriptional activity in the Arabidopsis genome.</title>
        <authorList>
            <person name="Yamada K."/>
            <person name="Lim J."/>
            <person name="Dale J.M."/>
            <person name="Chen H."/>
            <person name="Shinn P."/>
            <person name="Palm C.J."/>
            <person name="Southwick A.M."/>
            <person name="Wu H.C."/>
            <person name="Kim C.J."/>
            <person name="Nguyen M."/>
            <person name="Pham P.K."/>
            <person name="Cheuk R.F."/>
            <person name="Karlin-Newmann G."/>
            <person name="Liu S.X."/>
            <person name="Lam B."/>
            <person name="Sakano H."/>
            <person name="Wu T."/>
            <person name="Yu G."/>
            <person name="Miranda M."/>
            <person name="Quach H.L."/>
            <person name="Tripp M."/>
            <person name="Chang C.H."/>
            <person name="Lee J.M."/>
            <person name="Toriumi M.J."/>
            <person name="Chan M.M."/>
            <person name="Tang C.C."/>
            <person name="Onodera C.S."/>
            <person name="Deng J.M."/>
            <person name="Akiyama K."/>
            <person name="Ansari Y."/>
            <person name="Arakawa T."/>
            <person name="Banh J."/>
            <person name="Banno F."/>
            <person name="Bowser L."/>
            <person name="Brooks S.Y."/>
            <person name="Carninci P."/>
            <person name="Chao Q."/>
            <person name="Choy N."/>
            <person name="Enju A."/>
            <person name="Goldsmith A.D."/>
            <person name="Gurjal M."/>
            <person name="Hansen N.F."/>
            <person name="Hayashizaki Y."/>
            <person name="Johnson-Hopson C."/>
            <person name="Hsuan V.W."/>
            <person name="Iida K."/>
            <person name="Karnes M."/>
            <person name="Khan S."/>
            <person name="Koesema E."/>
            <person name="Ishida J."/>
            <person name="Jiang P.X."/>
            <person name="Jones T."/>
            <person name="Kawai J."/>
            <person name="Kamiya A."/>
            <person name="Meyers C."/>
            <person name="Nakajima M."/>
            <person name="Narusaka M."/>
            <person name="Seki M."/>
            <person name="Sakurai T."/>
            <person name="Satou M."/>
            <person name="Tamse R."/>
            <person name="Vaysberg M."/>
            <person name="Wallender E.K."/>
            <person name="Wong C."/>
            <person name="Yamamura Y."/>
            <person name="Yuan S."/>
            <person name="Shinozaki K."/>
            <person name="Davis R.W."/>
            <person name="Theologis A."/>
            <person name="Ecker J.R."/>
        </authorList>
    </citation>
    <scope>NUCLEOTIDE SEQUENCE [LARGE SCALE MRNA] (ISOFORM LONG)</scope>
    <source>
        <strain>cv. Columbia</strain>
    </source>
</reference>
<reference key="5">
    <citation type="submission" date="2002-03" db="EMBL/GenBank/DDBJ databases">
        <title>Full-length cDNA from Arabidopsis thaliana.</title>
        <authorList>
            <person name="Brover V.V."/>
            <person name="Troukhan M.E."/>
            <person name="Alexandrov N.A."/>
            <person name="Lu Y.-P."/>
            <person name="Flavell R.B."/>
            <person name="Feldmann K.A."/>
        </authorList>
    </citation>
    <scope>NUCLEOTIDE SEQUENCE [LARGE SCALE MRNA] (ISOFORM SHORT)</scope>
</reference>
<name>C76C1_ARATH</name>
<evidence type="ECO:0000250" key="1"/>
<evidence type="ECO:0000255" key="2"/>
<evidence type="ECO:0000303" key="3">
    <source ref="5"/>
</evidence>
<evidence type="ECO:0000305" key="4"/>
<sequence>MDIISGQALLLLFCFILSCFLIFTTTRSGRISRGATALPPGPPRLPIIGNIHLVGKHPHRSFAELSKTYGPVMSLKLGSLNTVVIASPEAAREVLRTHDQILSARSPTNAVRSINHQDASLVWLPSSSARWRLLRRLSVTQLLSPQRIEATKALRMNKVKELVSFISESSDREESVDISRVAFITTLNIISNILFSVDLGSYNAKASINGVQDTVISVMDAAGTPDAANYFPFLRFLDLQGNVKTFKVCTERLVRVFRGFIDAKIAEKSSQNNPKDVSKNDFVDNLLDYKGDESELSISDIEHLLLDMFTAGTDTSSSTLEWAMTELLKNPKTMAKAQAEIDCVIGQNGIVEESDISKLPYLQAVVKETFRLHTPVPLLIPRKAESDAEILGFMVLKDTQVLVNVWAIGRDPSVWDNPSQFEPERFLGKDMDVRGRDYELTPFGAGRRICPGMPLAMKTVSLMLASLLYSFDWKLPKGVLSEDLDMDETFGLTLHKTNPLHAVPVKKRANIN</sequence>
<gene>
    <name type="primary">CYP76C1</name>
    <name type="ordered locus">At2g45560</name>
    <name type="ORF">F17K2.9</name>
</gene>
<comment type="cofactor">
    <cofactor evidence="1">
        <name>heme</name>
        <dbReference type="ChEBI" id="CHEBI:30413"/>
    </cofactor>
</comment>
<comment type="subcellular location">
    <subcellularLocation>
        <location evidence="4">Membrane</location>
        <topology evidence="4">Single-pass membrane protein</topology>
    </subcellularLocation>
</comment>
<comment type="alternative products">
    <event type="alternative splicing"/>
    <isoform>
        <id>O64636-1</id>
        <name>Long</name>
        <sequence type="displayed"/>
    </isoform>
    <isoform>
        <id>O64636-2</id>
        <name>Short</name>
        <sequence type="described" ref="VSP_000619 VSP_000620"/>
    </isoform>
</comment>
<comment type="similarity">
    <text evidence="4">Belongs to the cytochrome P450 family.</text>
</comment>
<comment type="sequence caution" evidence="4">
    <conflict type="frameshift">
        <sequence resource="EMBL-CDS" id="BAA28540"/>
    </conflict>
</comment>
<dbReference type="EC" id="1.14.-.-"/>
<dbReference type="EMBL" id="D78600">
    <property type="protein sequence ID" value="BAA28540.1"/>
    <property type="status" value="ALT_FRAME"/>
    <property type="molecule type" value="mRNA"/>
</dbReference>
<dbReference type="EMBL" id="AC003680">
    <property type="protein sequence ID" value="AAC06157.2"/>
    <property type="molecule type" value="Genomic_DNA"/>
</dbReference>
<dbReference type="EMBL" id="CP002685">
    <property type="protein sequence ID" value="AEC10570.1"/>
    <property type="molecule type" value="Genomic_DNA"/>
</dbReference>
<dbReference type="EMBL" id="CP002685">
    <property type="protein sequence ID" value="AEC10571.1"/>
    <property type="molecule type" value="Genomic_DNA"/>
</dbReference>
<dbReference type="EMBL" id="AY078939">
    <property type="protein sequence ID" value="AAL84945.1"/>
    <property type="molecule type" value="mRNA"/>
</dbReference>
<dbReference type="EMBL" id="AY124874">
    <property type="protein sequence ID" value="AAM70583.1"/>
    <property type="molecule type" value="mRNA"/>
</dbReference>
<dbReference type="EMBL" id="AY085090">
    <property type="protein sequence ID" value="AAM61644.1"/>
    <property type="molecule type" value="mRNA"/>
</dbReference>
<dbReference type="PIR" id="T00869">
    <property type="entry name" value="T00869"/>
</dbReference>
<dbReference type="PIR" id="T52168">
    <property type="entry name" value="T52168"/>
</dbReference>
<dbReference type="RefSeq" id="NP_850439.1">
    <molecule id="O64636-1"/>
    <property type="nucleotide sequence ID" value="NM_180108.2"/>
</dbReference>
<dbReference type="RefSeq" id="NP_850440.1">
    <molecule id="O64636-2"/>
    <property type="nucleotide sequence ID" value="NM_180109.3"/>
</dbReference>
<dbReference type="SMR" id="O64636"/>
<dbReference type="BioGRID" id="4500">
    <property type="interactions" value="10"/>
</dbReference>
<dbReference type="FunCoup" id="O64636">
    <property type="interactions" value="480"/>
</dbReference>
<dbReference type="IntAct" id="O64636">
    <property type="interactions" value="9"/>
</dbReference>
<dbReference type="STRING" id="3702.O64636"/>
<dbReference type="PaxDb" id="3702-AT2G45560.1"/>
<dbReference type="ProteomicsDB" id="239162">
    <molecule id="O64636-1"/>
</dbReference>
<dbReference type="EnsemblPlants" id="AT2G45560.1">
    <molecule id="O64636-1"/>
    <property type="protein sequence ID" value="AT2G45560.1"/>
    <property type="gene ID" value="AT2G45560"/>
</dbReference>
<dbReference type="EnsemblPlants" id="AT2G45560.2">
    <molecule id="O64636-2"/>
    <property type="protein sequence ID" value="AT2G45560.2"/>
    <property type="gene ID" value="AT2G45560"/>
</dbReference>
<dbReference type="GeneID" id="819164"/>
<dbReference type="Gramene" id="AT2G45560.1">
    <molecule id="O64636-1"/>
    <property type="protein sequence ID" value="AT2G45560.1"/>
    <property type="gene ID" value="AT2G45560"/>
</dbReference>
<dbReference type="Gramene" id="AT2G45560.2">
    <molecule id="O64636-2"/>
    <property type="protein sequence ID" value="AT2G45560.2"/>
    <property type="gene ID" value="AT2G45560"/>
</dbReference>
<dbReference type="KEGG" id="ath:AT2G45560"/>
<dbReference type="Araport" id="AT2G45560"/>
<dbReference type="TAIR" id="AT2G45560">
    <property type="gene designation" value="CYP76C1"/>
</dbReference>
<dbReference type="eggNOG" id="KOG0156">
    <property type="taxonomic scope" value="Eukaryota"/>
</dbReference>
<dbReference type="HOGENOM" id="CLU_001570_4_2_1"/>
<dbReference type="InParanoid" id="O64636"/>
<dbReference type="OMA" id="HRCSEDN"/>
<dbReference type="PhylomeDB" id="O64636"/>
<dbReference type="BioCyc" id="ARA:AT2G45560-MONOMER"/>
<dbReference type="PRO" id="PR:O64636"/>
<dbReference type="Proteomes" id="UP000006548">
    <property type="component" value="Chromosome 2"/>
</dbReference>
<dbReference type="ExpressionAtlas" id="O64636">
    <property type="expression patterns" value="baseline and differential"/>
</dbReference>
<dbReference type="GO" id="GO:0016020">
    <property type="term" value="C:membrane"/>
    <property type="evidence" value="ECO:0007669"/>
    <property type="project" value="UniProtKB-SubCell"/>
</dbReference>
<dbReference type="GO" id="GO:0020037">
    <property type="term" value="F:heme binding"/>
    <property type="evidence" value="ECO:0007669"/>
    <property type="project" value="InterPro"/>
</dbReference>
<dbReference type="GO" id="GO:0005506">
    <property type="term" value="F:iron ion binding"/>
    <property type="evidence" value="ECO:0007669"/>
    <property type="project" value="InterPro"/>
</dbReference>
<dbReference type="GO" id="GO:0004497">
    <property type="term" value="F:monooxygenase activity"/>
    <property type="evidence" value="ECO:0007669"/>
    <property type="project" value="UniProtKB-KW"/>
</dbReference>
<dbReference type="GO" id="GO:0016705">
    <property type="term" value="F:oxidoreductase activity, acting on paired donors, with incorporation or reduction of molecular oxygen"/>
    <property type="evidence" value="ECO:0007669"/>
    <property type="project" value="InterPro"/>
</dbReference>
<dbReference type="CDD" id="cd11073">
    <property type="entry name" value="CYP76-like"/>
    <property type="match status" value="1"/>
</dbReference>
<dbReference type="FunFam" id="1.10.630.10:FF:000007">
    <property type="entry name" value="Cytochrome P450 76C4"/>
    <property type="match status" value="1"/>
</dbReference>
<dbReference type="Gene3D" id="1.10.630.10">
    <property type="entry name" value="Cytochrome P450"/>
    <property type="match status" value="1"/>
</dbReference>
<dbReference type="InterPro" id="IPR001128">
    <property type="entry name" value="Cyt_P450"/>
</dbReference>
<dbReference type="InterPro" id="IPR017972">
    <property type="entry name" value="Cyt_P450_CS"/>
</dbReference>
<dbReference type="InterPro" id="IPR002401">
    <property type="entry name" value="Cyt_P450_E_grp-I"/>
</dbReference>
<dbReference type="InterPro" id="IPR036396">
    <property type="entry name" value="Cyt_P450_sf"/>
</dbReference>
<dbReference type="PANTHER" id="PTHR47950:SF22">
    <property type="entry name" value="CYTOCHROME P450 76C1-RELATED"/>
    <property type="match status" value="1"/>
</dbReference>
<dbReference type="PANTHER" id="PTHR47950">
    <property type="entry name" value="CYTOCHROME P450, FAMILY 76, SUBFAMILY C, POLYPEPTIDE 5-RELATED"/>
    <property type="match status" value="1"/>
</dbReference>
<dbReference type="Pfam" id="PF00067">
    <property type="entry name" value="p450"/>
    <property type="match status" value="1"/>
</dbReference>
<dbReference type="PRINTS" id="PR00463">
    <property type="entry name" value="EP450I"/>
</dbReference>
<dbReference type="PRINTS" id="PR00385">
    <property type="entry name" value="P450"/>
</dbReference>
<dbReference type="SUPFAM" id="SSF48264">
    <property type="entry name" value="Cytochrome P450"/>
    <property type="match status" value="1"/>
</dbReference>
<dbReference type="PROSITE" id="PS00086">
    <property type="entry name" value="CYTOCHROME_P450"/>
    <property type="match status" value="1"/>
</dbReference>
<proteinExistence type="evidence at transcript level"/>